<organism>
    <name type="scientific">Arabidopsis thaliana</name>
    <name type="common">Mouse-ear cress</name>
    <dbReference type="NCBI Taxonomy" id="3702"/>
    <lineage>
        <taxon>Eukaryota</taxon>
        <taxon>Viridiplantae</taxon>
        <taxon>Streptophyta</taxon>
        <taxon>Embryophyta</taxon>
        <taxon>Tracheophyta</taxon>
        <taxon>Spermatophyta</taxon>
        <taxon>Magnoliopsida</taxon>
        <taxon>eudicotyledons</taxon>
        <taxon>Gunneridae</taxon>
        <taxon>Pentapetalae</taxon>
        <taxon>rosids</taxon>
        <taxon>malvids</taxon>
        <taxon>Brassicales</taxon>
        <taxon>Brassicaceae</taxon>
        <taxon>Camelineae</taxon>
        <taxon>Arabidopsis</taxon>
    </lineage>
</organism>
<gene>
    <name evidence="7" type="primary">4CLL6</name>
    <name evidence="11" type="ordered locus">At4g19010</name>
    <name evidence="12" type="ORF">F13C5.180</name>
</gene>
<feature type="chain" id="PRO_0000299179" description="4-coumarate--CoA ligase-like 6">
    <location>
        <begin position="1"/>
        <end position="566"/>
    </location>
</feature>
<feature type="region of interest" description="Disordered" evidence="4">
    <location>
        <begin position="1"/>
        <end position="21"/>
    </location>
</feature>
<feature type="region of interest" description="SBD1" evidence="2">
    <location>
        <begin position="286"/>
        <end position="356"/>
    </location>
</feature>
<feature type="region of interest" description="SBD2" evidence="2">
    <location>
        <begin position="357"/>
        <end position="421"/>
    </location>
</feature>
<feature type="short sequence motif" description="Microbody targeting signal" evidence="3">
    <location>
        <begin position="564"/>
        <end position="566"/>
    </location>
</feature>
<feature type="binding site" evidence="1">
    <location>
        <position position="212"/>
    </location>
    <ligand>
        <name>ATP</name>
        <dbReference type="ChEBI" id="CHEBI:30616"/>
    </ligand>
</feature>
<feature type="binding site" evidence="1">
    <location>
        <position position="213"/>
    </location>
    <ligand>
        <name>ATP</name>
        <dbReference type="ChEBI" id="CHEBI:30616"/>
    </ligand>
</feature>
<feature type="binding site" evidence="1">
    <location>
        <position position="214"/>
    </location>
    <ligand>
        <name>ATP</name>
        <dbReference type="ChEBI" id="CHEBI:30616"/>
    </ligand>
</feature>
<feature type="binding site" evidence="1">
    <location>
        <position position="215"/>
    </location>
    <ligand>
        <name>ATP</name>
        <dbReference type="ChEBI" id="CHEBI:30616"/>
    </ligand>
</feature>
<feature type="binding site" evidence="1">
    <location>
        <position position="216"/>
    </location>
    <ligand>
        <name>ATP</name>
        <dbReference type="ChEBI" id="CHEBI:30616"/>
    </ligand>
</feature>
<feature type="binding site" evidence="1">
    <location>
        <position position="220"/>
    </location>
    <ligand>
        <name>ATP</name>
        <dbReference type="ChEBI" id="CHEBI:30616"/>
    </ligand>
</feature>
<feature type="binding site" evidence="1">
    <location>
        <position position="263"/>
    </location>
    <ligand>
        <name>(E)-4-coumaroyl-AMP</name>
        <dbReference type="ChEBI" id="CHEBI:192348"/>
    </ligand>
</feature>
<feature type="binding site" evidence="1">
    <location>
        <position position="284"/>
    </location>
    <ligand>
        <name>CoA</name>
        <dbReference type="ChEBI" id="CHEBI:57287"/>
    </ligand>
</feature>
<feature type="binding site" evidence="1">
    <location>
        <position position="334"/>
    </location>
    <ligand>
        <name>(E)-4-coumaroyl-AMP</name>
        <dbReference type="ChEBI" id="CHEBI:192348"/>
    </ligand>
</feature>
<feature type="binding site" evidence="1">
    <location>
        <position position="356"/>
    </location>
    <ligand>
        <name>(E)-4-coumaroyl-AMP</name>
        <dbReference type="ChEBI" id="CHEBI:192348"/>
    </ligand>
</feature>
<feature type="binding site" evidence="1">
    <location>
        <position position="356"/>
    </location>
    <ligand>
        <name>ATP</name>
        <dbReference type="ChEBI" id="CHEBI:30616"/>
    </ligand>
</feature>
<feature type="binding site" evidence="1">
    <location>
        <position position="357"/>
    </location>
    <ligand>
        <name>(E)-4-coumaroyl-AMP</name>
        <dbReference type="ChEBI" id="CHEBI:192348"/>
    </ligand>
</feature>
<feature type="binding site" evidence="1">
    <location>
        <position position="357"/>
    </location>
    <ligand>
        <name>ATP</name>
        <dbReference type="ChEBI" id="CHEBI:30616"/>
    </ligand>
</feature>
<feature type="binding site" evidence="1">
    <location>
        <position position="361"/>
    </location>
    <ligand>
        <name>(E)-4-coumaroyl-AMP</name>
        <dbReference type="ChEBI" id="CHEBI:192348"/>
    </ligand>
</feature>
<feature type="binding site" evidence="1">
    <location>
        <position position="361"/>
    </location>
    <ligand>
        <name>ATP</name>
        <dbReference type="ChEBI" id="CHEBI:30616"/>
    </ligand>
</feature>
<feature type="binding site" evidence="1">
    <location>
        <position position="442"/>
    </location>
    <ligand>
        <name>ATP</name>
        <dbReference type="ChEBI" id="CHEBI:30616"/>
    </ligand>
</feature>
<feature type="binding site" evidence="1">
    <location>
        <position position="457"/>
    </location>
    <ligand>
        <name>ATP</name>
        <dbReference type="ChEBI" id="CHEBI:30616"/>
    </ligand>
</feature>
<feature type="binding site" evidence="1">
    <location>
        <position position="459"/>
    </location>
    <ligand>
        <name>(E)-4-coumaroyl-AMP</name>
        <dbReference type="ChEBI" id="CHEBI:192348"/>
    </ligand>
</feature>
<feature type="binding site" evidence="1">
    <location>
        <position position="463"/>
    </location>
    <ligand>
        <name>(E)-4-coumaroyl-AMP</name>
        <dbReference type="ChEBI" id="CHEBI:192348"/>
    </ligand>
</feature>
<feature type="binding site" evidence="1">
    <location>
        <position position="465"/>
    </location>
    <ligand>
        <name>CoA</name>
        <dbReference type="ChEBI" id="CHEBI:57287"/>
    </ligand>
</feature>
<feature type="binding site" evidence="1">
    <location>
        <position position="466"/>
    </location>
    <ligand>
        <name>CoA</name>
        <dbReference type="ChEBI" id="CHEBI:57287"/>
    </ligand>
</feature>
<feature type="binding site" evidence="1">
    <location>
        <position position="548"/>
    </location>
    <ligand>
        <name>ATP</name>
        <dbReference type="ChEBI" id="CHEBI:30616"/>
    </ligand>
</feature>
<feature type="sequence conflict" description="In Ref. 5; BAC42032 and 6; AAO64847." evidence="9" ref="5 6">
    <original>I</original>
    <variation>T</variation>
    <location>
        <position position="89"/>
    </location>
</feature>
<feature type="sequence conflict" description="In Ref. 1; AAP03017." evidence="9" ref="1">
    <original>S</original>
    <variation>P</variation>
    <location>
        <position position="170"/>
    </location>
</feature>
<keyword id="KW-0067">ATP-binding</keyword>
<keyword id="KW-0436">Ligase</keyword>
<keyword id="KW-0460">Magnesium</keyword>
<keyword id="KW-0547">Nucleotide-binding</keyword>
<keyword id="KW-0576">Peroxisome</keyword>
<keyword id="KW-1185">Reference proteome</keyword>
<keyword id="KW-0831">Ubiquinone biosynthesis</keyword>
<proteinExistence type="evidence at protein level"/>
<dbReference type="EC" id="6.2.1.-" evidence="5"/>
<dbReference type="EC" id="6.2.1.12" evidence="6"/>
<dbReference type="EC" id="6.2.1.27" evidence="6"/>
<dbReference type="EMBL" id="AY250834">
    <property type="protein sequence ID" value="AAP03017.1"/>
    <property type="molecule type" value="mRNA"/>
</dbReference>
<dbReference type="EMBL" id="AY376733">
    <property type="protein sequence ID" value="AAQ86592.1"/>
    <property type="molecule type" value="mRNA"/>
</dbReference>
<dbReference type="EMBL" id="AL021711">
    <property type="protein sequence ID" value="CAA16758.1"/>
    <property type="molecule type" value="Genomic_DNA"/>
</dbReference>
<dbReference type="EMBL" id="AL161549">
    <property type="protein sequence ID" value="CAB78903.1"/>
    <property type="molecule type" value="Genomic_DNA"/>
</dbReference>
<dbReference type="EMBL" id="CP002687">
    <property type="protein sequence ID" value="AEE84125.1"/>
    <property type="molecule type" value="Genomic_DNA"/>
</dbReference>
<dbReference type="EMBL" id="AK117362">
    <property type="protein sequence ID" value="BAC42032.1"/>
    <property type="molecule type" value="mRNA"/>
</dbReference>
<dbReference type="EMBL" id="BT005912">
    <property type="protein sequence ID" value="AAO64847.1"/>
    <property type="molecule type" value="mRNA"/>
</dbReference>
<dbReference type="PIR" id="F85214">
    <property type="entry name" value="F85214"/>
</dbReference>
<dbReference type="PIR" id="T05038">
    <property type="entry name" value="T05038"/>
</dbReference>
<dbReference type="RefSeq" id="NP_193636.1">
    <property type="nucleotide sequence ID" value="NM_118019.3"/>
</dbReference>
<dbReference type="SMR" id="Q84P24"/>
<dbReference type="FunCoup" id="Q84P24">
    <property type="interactions" value="1627"/>
</dbReference>
<dbReference type="STRING" id="3702.Q84P24"/>
<dbReference type="SwissLipids" id="SLP:000001790"/>
<dbReference type="iPTMnet" id="Q84P24"/>
<dbReference type="PaxDb" id="3702-AT4G19010.1"/>
<dbReference type="ProteomicsDB" id="245165"/>
<dbReference type="EnsemblPlants" id="AT4G19010.1">
    <property type="protein sequence ID" value="AT4G19010.1"/>
    <property type="gene ID" value="AT4G19010"/>
</dbReference>
<dbReference type="GeneID" id="827639"/>
<dbReference type="Gramene" id="AT4G19010.1">
    <property type="protein sequence ID" value="AT4G19010.1"/>
    <property type="gene ID" value="AT4G19010"/>
</dbReference>
<dbReference type="KEGG" id="ath:AT4G19010"/>
<dbReference type="Araport" id="AT4G19010"/>
<dbReference type="TAIR" id="AT4G19010"/>
<dbReference type="eggNOG" id="KOG1176">
    <property type="taxonomic scope" value="Eukaryota"/>
</dbReference>
<dbReference type="HOGENOM" id="CLU_000022_59_2_1"/>
<dbReference type="InParanoid" id="Q84P24"/>
<dbReference type="OMA" id="YIMPKFD"/>
<dbReference type="PhylomeDB" id="Q84P24"/>
<dbReference type="BioCyc" id="ARA:AT4G19010-MONOMER"/>
<dbReference type="SABIO-RK" id="Q84P24"/>
<dbReference type="PRO" id="PR:Q84P24"/>
<dbReference type="Proteomes" id="UP000006548">
    <property type="component" value="Chromosome 4"/>
</dbReference>
<dbReference type="ExpressionAtlas" id="Q84P24">
    <property type="expression patterns" value="baseline and differential"/>
</dbReference>
<dbReference type="GO" id="GO:0005777">
    <property type="term" value="C:peroxisome"/>
    <property type="evidence" value="ECO:0000314"/>
    <property type="project" value="TAIR"/>
</dbReference>
<dbReference type="GO" id="GO:0106286">
    <property type="term" value="F:(E)-caffeate-CoA ligase activity"/>
    <property type="evidence" value="ECO:0007669"/>
    <property type="project" value="RHEA"/>
</dbReference>
<dbReference type="GO" id="GO:0016207">
    <property type="term" value="F:4-coumarate-CoA ligase activity"/>
    <property type="evidence" value="ECO:0007669"/>
    <property type="project" value="UniProtKB-EC"/>
</dbReference>
<dbReference type="GO" id="GO:0018859">
    <property type="term" value="F:4-hydroxybenzoate-CoA ligase activity"/>
    <property type="evidence" value="ECO:0007669"/>
    <property type="project" value="UniProtKB-EC"/>
</dbReference>
<dbReference type="GO" id="GO:0005524">
    <property type="term" value="F:ATP binding"/>
    <property type="evidence" value="ECO:0007669"/>
    <property type="project" value="UniProtKB-KW"/>
</dbReference>
<dbReference type="GO" id="GO:0016405">
    <property type="term" value="F:CoA-ligase activity"/>
    <property type="evidence" value="ECO:0000314"/>
    <property type="project" value="TAIR"/>
</dbReference>
<dbReference type="GO" id="GO:0106290">
    <property type="term" value="F:trans-cinnamate-CoA ligase activity"/>
    <property type="evidence" value="ECO:0007669"/>
    <property type="project" value="RHEA"/>
</dbReference>
<dbReference type="GO" id="GO:0050563">
    <property type="term" value="F:trans-feruloyl-CoA synthase activity"/>
    <property type="evidence" value="ECO:0007669"/>
    <property type="project" value="RHEA"/>
</dbReference>
<dbReference type="GO" id="GO:0006744">
    <property type="term" value="P:ubiquinone biosynthetic process"/>
    <property type="evidence" value="ECO:0000315"/>
    <property type="project" value="TAIR"/>
</dbReference>
<dbReference type="CDD" id="cd05904">
    <property type="entry name" value="4CL"/>
    <property type="match status" value="1"/>
</dbReference>
<dbReference type="FunFam" id="3.30.300.30:FF:000007">
    <property type="entry name" value="4-coumarate--CoA ligase 2"/>
    <property type="match status" value="1"/>
</dbReference>
<dbReference type="FunFam" id="3.40.50.12780:FF:000003">
    <property type="entry name" value="Long-chain-fatty-acid--CoA ligase FadD"/>
    <property type="match status" value="1"/>
</dbReference>
<dbReference type="Gene3D" id="3.30.300.30">
    <property type="match status" value="1"/>
</dbReference>
<dbReference type="Gene3D" id="3.40.50.12780">
    <property type="entry name" value="N-terminal domain of ligase-like"/>
    <property type="match status" value="1"/>
</dbReference>
<dbReference type="InterPro" id="IPR025110">
    <property type="entry name" value="AMP-bd_C"/>
</dbReference>
<dbReference type="InterPro" id="IPR045851">
    <property type="entry name" value="AMP-bd_C_sf"/>
</dbReference>
<dbReference type="InterPro" id="IPR020845">
    <property type="entry name" value="AMP-binding_CS"/>
</dbReference>
<dbReference type="InterPro" id="IPR000873">
    <property type="entry name" value="AMP-dep_synth/lig_dom"/>
</dbReference>
<dbReference type="InterPro" id="IPR042099">
    <property type="entry name" value="ANL_N_sf"/>
</dbReference>
<dbReference type="PANTHER" id="PTHR24096:SF149">
    <property type="entry name" value="AMP-BINDING DOMAIN-CONTAINING PROTEIN-RELATED"/>
    <property type="match status" value="1"/>
</dbReference>
<dbReference type="PANTHER" id="PTHR24096">
    <property type="entry name" value="LONG-CHAIN-FATTY-ACID--COA LIGASE"/>
    <property type="match status" value="1"/>
</dbReference>
<dbReference type="Pfam" id="PF00501">
    <property type="entry name" value="AMP-binding"/>
    <property type="match status" value="1"/>
</dbReference>
<dbReference type="Pfam" id="PF13193">
    <property type="entry name" value="AMP-binding_C"/>
    <property type="match status" value="1"/>
</dbReference>
<dbReference type="SUPFAM" id="SSF56801">
    <property type="entry name" value="Acetyl-CoA synthetase-like"/>
    <property type="match status" value="1"/>
</dbReference>
<dbReference type="PROSITE" id="PS00455">
    <property type="entry name" value="AMP_BINDING"/>
    <property type="match status" value="1"/>
</dbReference>
<protein>
    <recommendedName>
        <fullName evidence="7">4-coumarate--CoA ligase-like 6</fullName>
        <ecNumber evidence="5">6.2.1.-</ecNumber>
    </recommendedName>
    <alternativeName>
        <fullName evidence="8">4-coumarate--CoA ligase</fullName>
        <ecNumber evidence="6">6.2.1.12</ecNumber>
    </alternativeName>
    <alternativeName>
        <fullName>4-coumarate--CoA ligase isoform 7</fullName>
        <shortName>At4CL7</shortName>
    </alternativeName>
    <alternativeName>
        <fullName evidence="8">4-hydroxybenzoate--CoA ligase</fullName>
        <ecNumber evidence="6">6.2.1.27</ecNumber>
    </alternativeName>
</protein>
<name>4CLL6_ARATH</name>
<reference key="1">
    <citation type="journal article" date="2003" name="Plant Physiol.">
        <title>Arabidopsis contains a large superfamily of acyl-activating enzymes. Phylogenetic and biochemical analysis reveals a new class of acyl-coenzyme a synthetases.</title>
        <authorList>
            <person name="Shockey J.M."/>
            <person name="Fulda M.S."/>
            <person name="Browse J."/>
        </authorList>
    </citation>
    <scope>NUCLEOTIDE SEQUENCE [MRNA]</scope>
    <scope>GENE FAMILY ORGANIZATION</scope>
    <source>
        <strain>cv. Wassilewskija</strain>
    </source>
</reference>
<reference key="2">
    <citation type="submission" date="2003-08" db="EMBL/GenBank/DDBJ databases">
        <title>Functional classification of Arabidopsis thaliana 4-coumarate CoA ligase genes.</title>
        <authorList>
            <person name="Lawrence P.K."/>
        </authorList>
    </citation>
    <scope>NUCLEOTIDE SEQUENCE [MRNA]</scope>
</reference>
<reference key="3">
    <citation type="journal article" date="1999" name="Nature">
        <title>Sequence and analysis of chromosome 4 of the plant Arabidopsis thaliana.</title>
        <authorList>
            <person name="Mayer K.F.X."/>
            <person name="Schueller C."/>
            <person name="Wambutt R."/>
            <person name="Murphy G."/>
            <person name="Volckaert G."/>
            <person name="Pohl T."/>
            <person name="Duesterhoeft A."/>
            <person name="Stiekema W."/>
            <person name="Entian K.-D."/>
            <person name="Terryn N."/>
            <person name="Harris B."/>
            <person name="Ansorge W."/>
            <person name="Brandt P."/>
            <person name="Grivell L.A."/>
            <person name="Rieger M."/>
            <person name="Weichselgartner M."/>
            <person name="de Simone V."/>
            <person name="Obermaier B."/>
            <person name="Mache R."/>
            <person name="Mueller M."/>
            <person name="Kreis M."/>
            <person name="Delseny M."/>
            <person name="Puigdomenech P."/>
            <person name="Watson M."/>
            <person name="Schmidtheini T."/>
            <person name="Reichert B."/>
            <person name="Portetelle D."/>
            <person name="Perez-Alonso M."/>
            <person name="Boutry M."/>
            <person name="Bancroft I."/>
            <person name="Vos P."/>
            <person name="Hoheisel J."/>
            <person name="Zimmermann W."/>
            <person name="Wedler H."/>
            <person name="Ridley P."/>
            <person name="Langham S.-A."/>
            <person name="McCullagh B."/>
            <person name="Bilham L."/>
            <person name="Robben J."/>
            <person name="van der Schueren J."/>
            <person name="Grymonprez B."/>
            <person name="Chuang Y.-J."/>
            <person name="Vandenbussche F."/>
            <person name="Braeken M."/>
            <person name="Weltjens I."/>
            <person name="Voet M."/>
            <person name="Bastiaens I."/>
            <person name="Aert R."/>
            <person name="Defoor E."/>
            <person name="Weitzenegger T."/>
            <person name="Bothe G."/>
            <person name="Ramsperger U."/>
            <person name="Hilbert H."/>
            <person name="Braun M."/>
            <person name="Holzer E."/>
            <person name="Brandt A."/>
            <person name="Peters S."/>
            <person name="van Staveren M."/>
            <person name="Dirkse W."/>
            <person name="Mooijman P."/>
            <person name="Klein Lankhorst R."/>
            <person name="Rose M."/>
            <person name="Hauf J."/>
            <person name="Koetter P."/>
            <person name="Berneiser S."/>
            <person name="Hempel S."/>
            <person name="Feldpausch M."/>
            <person name="Lamberth S."/>
            <person name="Van den Daele H."/>
            <person name="De Keyser A."/>
            <person name="Buysshaert C."/>
            <person name="Gielen J."/>
            <person name="Villarroel R."/>
            <person name="De Clercq R."/>
            <person name="van Montagu M."/>
            <person name="Rogers J."/>
            <person name="Cronin A."/>
            <person name="Quail M.A."/>
            <person name="Bray-Allen S."/>
            <person name="Clark L."/>
            <person name="Doggett J."/>
            <person name="Hall S."/>
            <person name="Kay M."/>
            <person name="Lennard N."/>
            <person name="McLay K."/>
            <person name="Mayes R."/>
            <person name="Pettett A."/>
            <person name="Rajandream M.A."/>
            <person name="Lyne M."/>
            <person name="Benes V."/>
            <person name="Rechmann S."/>
            <person name="Borkova D."/>
            <person name="Bloecker H."/>
            <person name="Scharfe M."/>
            <person name="Grimm M."/>
            <person name="Loehnert T.-H."/>
            <person name="Dose S."/>
            <person name="de Haan M."/>
            <person name="Maarse A.C."/>
            <person name="Schaefer M."/>
            <person name="Mueller-Auer S."/>
            <person name="Gabel C."/>
            <person name="Fuchs M."/>
            <person name="Fartmann B."/>
            <person name="Granderath K."/>
            <person name="Dauner D."/>
            <person name="Herzl A."/>
            <person name="Neumann S."/>
            <person name="Argiriou A."/>
            <person name="Vitale D."/>
            <person name="Liguori R."/>
            <person name="Piravandi E."/>
            <person name="Massenet O."/>
            <person name="Quigley F."/>
            <person name="Clabauld G."/>
            <person name="Muendlein A."/>
            <person name="Felber R."/>
            <person name="Schnabl S."/>
            <person name="Hiller R."/>
            <person name="Schmidt W."/>
            <person name="Lecharny A."/>
            <person name="Aubourg S."/>
            <person name="Chefdor F."/>
            <person name="Cooke R."/>
            <person name="Berger C."/>
            <person name="Monfort A."/>
            <person name="Casacuberta E."/>
            <person name="Gibbons T."/>
            <person name="Weber N."/>
            <person name="Vandenbol M."/>
            <person name="Bargues M."/>
            <person name="Terol J."/>
            <person name="Torres A."/>
            <person name="Perez-Perez A."/>
            <person name="Purnelle B."/>
            <person name="Bent E."/>
            <person name="Johnson S."/>
            <person name="Tacon D."/>
            <person name="Jesse T."/>
            <person name="Heijnen L."/>
            <person name="Schwarz S."/>
            <person name="Scholler P."/>
            <person name="Heber S."/>
            <person name="Francs P."/>
            <person name="Bielke C."/>
            <person name="Frishman D."/>
            <person name="Haase D."/>
            <person name="Lemcke K."/>
            <person name="Mewes H.-W."/>
            <person name="Stocker S."/>
            <person name="Zaccaria P."/>
            <person name="Bevan M."/>
            <person name="Wilson R.K."/>
            <person name="de la Bastide M."/>
            <person name="Habermann K."/>
            <person name="Parnell L."/>
            <person name="Dedhia N."/>
            <person name="Gnoj L."/>
            <person name="Schutz K."/>
            <person name="Huang E."/>
            <person name="Spiegel L."/>
            <person name="Sekhon M."/>
            <person name="Murray J."/>
            <person name="Sheet P."/>
            <person name="Cordes M."/>
            <person name="Abu-Threideh J."/>
            <person name="Stoneking T."/>
            <person name="Kalicki J."/>
            <person name="Graves T."/>
            <person name="Harmon G."/>
            <person name="Edwards J."/>
            <person name="Latreille P."/>
            <person name="Courtney L."/>
            <person name="Cloud J."/>
            <person name="Abbott A."/>
            <person name="Scott K."/>
            <person name="Johnson D."/>
            <person name="Minx P."/>
            <person name="Bentley D."/>
            <person name="Fulton B."/>
            <person name="Miller N."/>
            <person name="Greco T."/>
            <person name="Kemp K."/>
            <person name="Kramer J."/>
            <person name="Fulton L."/>
            <person name="Mardis E."/>
            <person name="Dante M."/>
            <person name="Pepin K."/>
            <person name="Hillier L.W."/>
            <person name="Nelson J."/>
            <person name="Spieth J."/>
            <person name="Ryan E."/>
            <person name="Andrews S."/>
            <person name="Geisel C."/>
            <person name="Layman D."/>
            <person name="Du H."/>
            <person name="Ali J."/>
            <person name="Berghoff A."/>
            <person name="Jones K."/>
            <person name="Drone K."/>
            <person name="Cotton M."/>
            <person name="Joshu C."/>
            <person name="Antonoiu B."/>
            <person name="Zidanic M."/>
            <person name="Strong C."/>
            <person name="Sun H."/>
            <person name="Lamar B."/>
            <person name="Yordan C."/>
            <person name="Ma P."/>
            <person name="Zhong J."/>
            <person name="Preston R."/>
            <person name="Vil D."/>
            <person name="Shekher M."/>
            <person name="Matero A."/>
            <person name="Shah R."/>
            <person name="Swaby I.K."/>
            <person name="O'Shaughnessy A."/>
            <person name="Rodriguez M."/>
            <person name="Hoffman J."/>
            <person name="Till S."/>
            <person name="Granat S."/>
            <person name="Shohdy N."/>
            <person name="Hasegawa A."/>
            <person name="Hameed A."/>
            <person name="Lodhi M."/>
            <person name="Johnson A."/>
            <person name="Chen E."/>
            <person name="Marra M.A."/>
            <person name="Martienssen R."/>
            <person name="McCombie W.R."/>
        </authorList>
    </citation>
    <scope>NUCLEOTIDE SEQUENCE [LARGE SCALE GENOMIC DNA]</scope>
    <source>
        <strain>cv. Columbia</strain>
    </source>
</reference>
<reference key="4">
    <citation type="journal article" date="2017" name="Plant J.">
        <title>Araport11: a complete reannotation of the Arabidopsis thaliana reference genome.</title>
        <authorList>
            <person name="Cheng C.Y."/>
            <person name="Krishnakumar V."/>
            <person name="Chan A.P."/>
            <person name="Thibaud-Nissen F."/>
            <person name="Schobel S."/>
            <person name="Town C.D."/>
        </authorList>
    </citation>
    <scope>GENOME REANNOTATION</scope>
    <source>
        <strain>cv. Columbia</strain>
    </source>
</reference>
<reference key="5">
    <citation type="journal article" date="2002" name="Science">
        <title>Functional annotation of a full-length Arabidopsis cDNA collection.</title>
        <authorList>
            <person name="Seki M."/>
            <person name="Narusaka M."/>
            <person name="Kamiya A."/>
            <person name="Ishida J."/>
            <person name="Satou M."/>
            <person name="Sakurai T."/>
            <person name="Nakajima M."/>
            <person name="Enju A."/>
            <person name="Akiyama K."/>
            <person name="Oono Y."/>
            <person name="Muramatsu M."/>
            <person name="Hayashizaki Y."/>
            <person name="Kawai J."/>
            <person name="Carninci P."/>
            <person name="Itoh M."/>
            <person name="Ishii Y."/>
            <person name="Arakawa T."/>
            <person name="Shibata K."/>
            <person name="Shinagawa A."/>
            <person name="Shinozaki K."/>
        </authorList>
    </citation>
    <scope>NUCLEOTIDE SEQUENCE [LARGE SCALE MRNA]</scope>
    <source>
        <strain>cv. Columbia</strain>
    </source>
</reference>
<reference key="6">
    <citation type="journal article" date="2003" name="Science">
        <title>Empirical analysis of transcriptional activity in the Arabidopsis genome.</title>
        <authorList>
            <person name="Yamada K."/>
            <person name="Lim J."/>
            <person name="Dale J.M."/>
            <person name="Chen H."/>
            <person name="Shinn P."/>
            <person name="Palm C.J."/>
            <person name="Southwick A.M."/>
            <person name="Wu H.C."/>
            <person name="Kim C.J."/>
            <person name="Nguyen M."/>
            <person name="Pham P.K."/>
            <person name="Cheuk R.F."/>
            <person name="Karlin-Newmann G."/>
            <person name="Liu S.X."/>
            <person name="Lam B."/>
            <person name="Sakano H."/>
            <person name="Wu T."/>
            <person name="Yu G."/>
            <person name="Miranda M."/>
            <person name="Quach H.L."/>
            <person name="Tripp M."/>
            <person name="Chang C.H."/>
            <person name="Lee J.M."/>
            <person name="Toriumi M.J."/>
            <person name="Chan M.M."/>
            <person name="Tang C.C."/>
            <person name="Onodera C.S."/>
            <person name="Deng J.M."/>
            <person name="Akiyama K."/>
            <person name="Ansari Y."/>
            <person name="Arakawa T."/>
            <person name="Banh J."/>
            <person name="Banno F."/>
            <person name="Bowser L."/>
            <person name="Brooks S.Y."/>
            <person name="Carninci P."/>
            <person name="Chao Q."/>
            <person name="Choy N."/>
            <person name="Enju A."/>
            <person name="Goldsmith A.D."/>
            <person name="Gurjal M."/>
            <person name="Hansen N.F."/>
            <person name="Hayashizaki Y."/>
            <person name="Johnson-Hopson C."/>
            <person name="Hsuan V.W."/>
            <person name="Iida K."/>
            <person name="Karnes M."/>
            <person name="Khan S."/>
            <person name="Koesema E."/>
            <person name="Ishida J."/>
            <person name="Jiang P.X."/>
            <person name="Jones T."/>
            <person name="Kawai J."/>
            <person name="Kamiya A."/>
            <person name="Meyers C."/>
            <person name="Nakajima M."/>
            <person name="Narusaka M."/>
            <person name="Seki M."/>
            <person name="Sakurai T."/>
            <person name="Satou M."/>
            <person name="Tamse R."/>
            <person name="Vaysberg M."/>
            <person name="Wallender E.K."/>
            <person name="Wong C."/>
            <person name="Yamamura Y."/>
            <person name="Yuan S."/>
            <person name="Shinozaki K."/>
            <person name="Davis R.W."/>
            <person name="Theologis A."/>
            <person name="Ecker J.R."/>
        </authorList>
    </citation>
    <scope>NUCLEOTIDE SEQUENCE [LARGE SCALE MRNA]</scope>
    <source>
        <strain>cv. Columbia</strain>
    </source>
</reference>
<reference key="7">
    <citation type="journal article" date="2003" name="Proc. Natl. Acad. Sci. U.S.A.">
        <title>The substrate specificity-determining amino acid code of 4-coumarate:CoA ligase.</title>
        <authorList>
            <person name="Schneider K."/>
            <person name="Hoevel K."/>
            <person name="Witzel K."/>
            <person name="Hamberger B."/>
            <person name="Schomburg D."/>
            <person name="Kombrink E."/>
            <person name="Stuible H.-P."/>
        </authorList>
    </citation>
    <scope>GENE FAMILY ORGANIZATION</scope>
</reference>
<reference key="8">
    <citation type="journal article" date="2008" name="J. Exp. Bot.">
        <title>Jasmonates meet fatty acids: functional analysis of a new acyl-coenzyme A synthetase family from Arabidopsis thaliana.</title>
        <authorList>
            <person name="Kienow L."/>
            <person name="Schneider K."/>
            <person name="Bartsch M."/>
            <person name="Stuible H.-P."/>
            <person name="Weng H."/>
            <person name="Miersch O."/>
            <person name="Wasternack C."/>
            <person name="Kombrink E."/>
        </authorList>
    </citation>
    <scope>FUNCTION</scope>
    <scope>CATALYTIC ACTIVITY</scope>
    <scope>BIOPHYSICOCHEMICAL PROPERTIES</scope>
    <scope>TISSUE SPECIFICITY</scope>
</reference>
<reference key="9">
    <citation type="journal article" date="2014" name="Plant Cell">
        <title>The Origin and Biosynthesis of the Benzenoid Moiety of Ubiquinone (Coenzyme Q) in Arabidopsis.</title>
        <authorList>
            <person name="Block A."/>
            <person name="Widhalm J.R."/>
            <person name="Fatihi A."/>
            <person name="Cahoon R.E."/>
            <person name="Wamboldt Y."/>
            <person name="Elowsky C."/>
            <person name="Mackenzie S.A."/>
            <person name="Cahoon E.B."/>
            <person name="Chapple C."/>
            <person name="Dudareva N."/>
            <person name="Basset G.J."/>
        </authorList>
    </citation>
    <scope>FUNCTION</scope>
    <scope>DISRUPTION PHENOTYPE</scope>
    <scope>SUBCELLULAR LOCATION</scope>
    <scope>BIOPHYSICOCHEMICAL PROPERTIES</scope>
</reference>
<evidence type="ECO:0000250" key="1">
    <source>
        <dbReference type="UniProtKB" id="O24146"/>
    </source>
</evidence>
<evidence type="ECO:0000250" key="2">
    <source>
        <dbReference type="UniProtKB" id="Q42524"/>
    </source>
</evidence>
<evidence type="ECO:0000255" key="3"/>
<evidence type="ECO:0000256" key="4">
    <source>
        <dbReference type="SAM" id="MobiDB-lite"/>
    </source>
</evidence>
<evidence type="ECO:0000269" key="5">
    <source>
    </source>
</evidence>
<evidence type="ECO:0000269" key="6">
    <source>
    </source>
</evidence>
<evidence type="ECO:0000303" key="7">
    <source>
    </source>
</evidence>
<evidence type="ECO:0000303" key="8">
    <source>
    </source>
</evidence>
<evidence type="ECO:0000305" key="9"/>
<evidence type="ECO:0000305" key="10">
    <source>
    </source>
</evidence>
<evidence type="ECO:0000312" key="11">
    <source>
        <dbReference type="Araport" id="AT4G19010"/>
    </source>
</evidence>
<evidence type="ECO:0000312" key="12">
    <source>
        <dbReference type="EMBL" id="CAA16758.1"/>
    </source>
</evidence>
<accession>Q84P24</accession>
<accession>O49414</accession>
<accession>Q8GYV8</accession>
<sequence>MAATHLHIPPNPKTQTSHQNPPFWFSSKTGIYTSKFPSLHLPVDPNLDAVSALFSHKHHGDTALIDSLTGFSISHTELQIMVQSMAAGIYHVLGVRQGDVVSLVLPNSVYFPMIFLSLISLGAIVTTMNPSSSLGEIKKQVSECSVGLAFTSTENVEKLSSLGVSVISVSESYDFDSIRIENPKFYSIMKESFGFVPKPLIKQDDVAAIMYSSGTTGASKGVLLTHRNLIASMELFVRFEASQYEYPGSSNVYLAALPLCHIYGLSLFVMGLLSLGSTIVVMKRFDASDVVNVIERFKITHFPVVPPMLMALTKKAKGVCGEVFKSLKQVSSGAAPLSRKFIEDFLQTLPHVDLIQGYGMTESTAVGTRGFNSEKLSRYSSVGLLAPNMQAKVVDWSSGSFLPPGNRGELWIQGPGVMKGYLNNPKATQMSIVEDSWLRTGDIAYFDEDGYLFIVDRIKEIIKYKGFQIAPADLEAVLVSHPLIIDAAVTAAPNEECGEIPVAFVVRRQETTLSEEDVISYVASQVAPYRKVRKVVMVNSIPKSPTGKILRKELKRILTNSVSSRL</sequence>
<comment type="function">
    <text evidence="1 5 6">Contributes to jasmonic acid biosynthesis by initiating the beta-oxidative chain shortening of its precursors (PubMed:18267944). Acts as a carboxylate--CoA ligase that can use preferentially p-coumarate, ferulate and caffeate as substrates and, with a lower efficiency, (E)-cinnamate and 4-hydroxybenzoate as substrates (PubMed:24838974). Involved in the biosynthesis of ubiquinone from phenylalanine by activating the propyl side chain of 4-coumarate, and possibly trans-cinnamate and 4-hydroxybenzoate, for subsequent beta-oxidative shortening and the formation of the benzenoid moiety of ubiquinone (PubMed:24838974). Follows a two-step reaction mechanism, wherein the carboxylate substrate first undergoes adenylation by ATP, followed by a thioesterification in the presence of CoA to yield the final CoA thioester (By similarity).</text>
</comment>
<comment type="catalytic activity">
    <reaction evidence="6">
        <text>(E)-4-coumarate + ATP + CoA = (E)-4-coumaroyl-CoA + AMP + diphosphate</text>
        <dbReference type="Rhea" id="RHEA:19641"/>
        <dbReference type="ChEBI" id="CHEBI:12876"/>
        <dbReference type="ChEBI" id="CHEBI:30616"/>
        <dbReference type="ChEBI" id="CHEBI:33019"/>
        <dbReference type="ChEBI" id="CHEBI:57287"/>
        <dbReference type="ChEBI" id="CHEBI:85008"/>
        <dbReference type="ChEBI" id="CHEBI:456215"/>
        <dbReference type="EC" id="6.2.1.12"/>
    </reaction>
    <physiologicalReaction direction="left-to-right" evidence="6">
        <dbReference type="Rhea" id="RHEA:19642"/>
    </physiologicalReaction>
</comment>
<comment type="catalytic activity">
    <reaction evidence="10">
        <text>(E)-4-coumarate + ATP + H(+) = (E)-4-coumaroyl-AMP + diphosphate</text>
        <dbReference type="Rhea" id="RHEA:72419"/>
        <dbReference type="ChEBI" id="CHEBI:12876"/>
        <dbReference type="ChEBI" id="CHEBI:15378"/>
        <dbReference type="ChEBI" id="CHEBI:30616"/>
        <dbReference type="ChEBI" id="CHEBI:33019"/>
        <dbReference type="ChEBI" id="CHEBI:192348"/>
    </reaction>
    <physiologicalReaction direction="left-to-right" evidence="10">
        <dbReference type="Rhea" id="RHEA:72420"/>
    </physiologicalReaction>
</comment>
<comment type="catalytic activity">
    <reaction evidence="10">
        <text>(E)-4-coumaroyl-AMP + CoA = (E)-4-coumaroyl-CoA + AMP + H(+)</text>
        <dbReference type="Rhea" id="RHEA:72423"/>
        <dbReference type="ChEBI" id="CHEBI:15378"/>
        <dbReference type="ChEBI" id="CHEBI:57287"/>
        <dbReference type="ChEBI" id="CHEBI:85008"/>
        <dbReference type="ChEBI" id="CHEBI:192348"/>
        <dbReference type="ChEBI" id="CHEBI:456215"/>
    </reaction>
    <physiologicalReaction direction="left-to-right" evidence="10">
        <dbReference type="Rhea" id="RHEA:72424"/>
    </physiologicalReaction>
</comment>
<comment type="catalytic activity">
    <reaction evidence="6">
        <text>(E)-ferulate + ATP + CoA = (E)-feruloyl-CoA + AMP + diphosphate</text>
        <dbReference type="Rhea" id="RHEA:36251"/>
        <dbReference type="ChEBI" id="CHEBI:29749"/>
        <dbReference type="ChEBI" id="CHEBI:30616"/>
        <dbReference type="ChEBI" id="CHEBI:33019"/>
        <dbReference type="ChEBI" id="CHEBI:57287"/>
        <dbReference type="ChEBI" id="CHEBI:87305"/>
        <dbReference type="ChEBI" id="CHEBI:456215"/>
    </reaction>
    <physiologicalReaction direction="left-to-right" evidence="6">
        <dbReference type="Rhea" id="RHEA:36252"/>
    </physiologicalReaction>
</comment>
<comment type="catalytic activity">
    <reaction evidence="10">
        <text>(E)-ferulate + ATP + H(+) = (E)-feruloyl-AMP + diphosphate</text>
        <dbReference type="Rhea" id="RHEA:72439"/>
        <dbReference type="ChEBI" id="CHEBI:15378"/>
        <dbReference type="ChEBI" id="CHEBI:29749"/>
        <dbReference type="ChEBI" id="CHEBI:30616"/>
        <dbReference type="ChEBI" id="CHEBI:33019"/>
        <dbReference type="ChEBI" id="CHEBI:192350"/>
    </reaction>
    <physiologicalReaction direction="left-to-right" evidence="10">
        <dbReference type="Rhea" id="RHEA:72440"/>
    </physiologicalReaction>
</comment>
<comment type="catalytic activity">
    <reaction evidence="10">
        <text>(E)-feruloyl-AMP + CoA = (E)-feruloyl-CoA + AMP + H(+)</text>
        <dbReference type="Rhea" id="RHEA:72443"/>
        <dbReference type="ChEBI" id="CHEBI:15378"/>
        <dbReference type="ChEBI" id="CHEBI:57287"/>
        <dbReference type="ChEBI" id="CHEBI:87305"/>
        <dbReference type="ChEBI" id="CHEBI:192350"/>
        <dbReference type="ChEBI" id="CHEBI:456215"/>
    </reaction>
    <physiologicalReaction direction="left-to-right" evidence="10">
        <dbReference type="Rhea" id="RHEA:72444"/>
    </physiologicalReaction>
</comment>
<comment type="catalytic activity">
    <reaction evidence="6">
        <text>(E)-caffeate + ATP + CoA = (E)-caffeoyl-CoA + AMP + diphosphate</text>
        <dbReference type="Rhea" id="RHEA:36299"/>
        <dbReference type="ChEBI" id="CHEBI:30616"/>
        <dbReference type="ChEBI" id="CHEBI:33019"/>
        <dbReference type="ChEBI" id="CHEBI:57287"/>
        <dbReference type="ChEBI" id="CHEBI:57770"/>
        <dbReference type="ChEBI" id="CHEBI:87136"/>
        <dbReference type="ChEBI" id="CHEBI:456215"/>
    </reaction>
    <physiologicalReaction direction="left-to-right" evidence="6">
        <dbReference type="Rhea" id="RHEA:36300"/>
    </physiologicalReaction>
</comment>
<comment type="catalytic activity">
    <reaction evidence="10">
        <text>(E)-caffeate + ATP + H(+) = (E)-caffeoyl-AMP + diphosphate</text>
        <dbReference type="Rhea" id="RHEA:72431"/>
        <dbReference type="ChEBI" id="CHEBI:15378"/>
        <dbReference type="ChEBI" id="CHEBI:30616"/>
        <dbReference type="ChEBI" id="CHEBI:33019"/>
        <dbReference type="ChEBI" id="CHEBI:57770"/>
        <dbReference type="ChEBI" id="CHEBI:192349"/>
    </reaction>
    <physiologicalReaction direction="left-to-right" evidence="10">
        <dbReference type="Rhea" id="RHEA:72432"/>
    </physiologicalReaction>
</comment>
<comment type="catalytic activity">
    <reaction evidence="10">
        <text>(E)-caffeoyl-AMP + CoA = (E)-caffeoyl-CoA + AMP + H(+)</text>
        <dbReference type="Rhea" id="RHEA:72435"/>
        <dbReference type="ChEBI" id="CHEBI:15378"/>
        <dbReference type="ChEBI" id="CHEBI:57287"/>
        <dbReference type="ChEBI" id="CHEBI:87136"/>
        <dbReference type="ChEBI" id="CHEBI:192349"/>
        <dbReference type="ChEBI" id="CHEBI:456215"/>
    </reaction>
    <physiologicalReaction direction="left-to-right" evidence="10">
        <dbReference type="Rhea" id="RHEA:72436"/>
    </physiologicalReaction>
</comment>
<comment type="catalytic activity">
    <reaction evidence="6">
        <text>(E)-cinnamate + ATP + CoA = (E)-cinnamoyl-CoA + AMP + diphosphate</text>
        <dbReference type="Rhea" id="RHEA:64788"/>
        <dbReference type="ChEBI" id="CHEBI:15669"/>
        <dbReference type="ChEBI" id="CHEBI:30616"/>
        <dbReference type="ChEBI" id="CHEBI:33019"/>
        <dbReference type="ChEBI" id="CHEBI:57252"/>
        <dbReference type="ChEBI" id="CHEBI:57287"/>
        <dbReference type="ChEBI" id="CHEBI:456215"/>
    </reaction>
    <physiologicalReaction direction="left-to-right" evidence="6">
        <dbReference type="Rhea" id="RHEA:64789"/>
    </physiologicalReaction>
</comment>
<comment type="catalytic activity">
    <reaction evidence="6">
        <text>4-hydroxybenzoate + ATP + CoA = 4-hydroxybenzoyl-CoA + AMP + diphosphate</text>
        <dbReference type="Rhea" id="RHEA:23116"/>
        <dbReference type="ChEBI" id="CHEBI:17879"/>
        <dbReference type="ChEBI" id="CHEBI:30616"/>
        <dbReference type="ChEBI" id="CHEBI:33019"/>
        <dbReference type="ChEBI" id="CHEBI:57287"/>
        <dbReference type="ChEBI" id="CHEBI:57356"/>
        <dbReference type="ChEBI" id="CHEBI:456215"/>
        <dbReference type="EC" id="6.2.1.27"/>
    </reaction>
    <physiologicalReaction direction="left-to-right" evidence="6">
        <dbReference type="Rhea" id="RHEA:23117"/>
    </physiologicalReaction>
</comment>
<comment type="catalytic activity">
    <reaction evidence="5">
        <text>tetradecanoate + ATP + CoA = tetradecanoyl-CoA + AMP + diphosphate</text>
        <dbReference type="Rhea" id="RHEA:33619"/>
        <dbReference type="ChEBI" id="CHEBI:30616"/>
        <dbReference type="ChEBI" id="CHEBI:30807"/>
        <dbReference type="ChEBI" id="CHEBI:33019"/>
        <dbReference type="ChEBI" id="CHEBI:57287"/>
        <dbReference type="ChEBI" id="CHEBI:57385"/>
        <dbReference type="ChEBI" id="CHEBI:456215"/>
    </reaction>
    <physiologicalReaction direction="left-to-right" evidence="5">
        <dbReference type="Rhea" id="RHEA:33620"/>
    </physiologicalReaction>
</comment>
<comment type="catalytic activity">
    <reaction evidence="5">
        <text>hexanoate + ATP + CoA = hexanoyl-CoA + AMP + diphosphate</text>
        <dbReference type="Rhea" id="RHEA:43740"/>
        <dbReference type="ChEBI" id="CHEBI:17120"/>
        <dbReference type="ChEBI" id="CHEBI:30616"/>
        <dbReference type="ChEBI" id="CHEBI:33019"/>
        <dbReference type="ChEBI" id="CHEBI:57287"/>
        <dbReference type="ChEBI" id="CHEBI:62620"/>
        <dbReference type="ChEBI" id="CHEBI:456215"/>
    </reaction>
    <physiologicalReaction direction="left-to-right" evidence="5">
        <dbReference type="Rhea" id="RHEA:43741"/>
    </physiologicalReaction>
</comment>
<comment type="catalytic activity">
    <reaction evidence="5">
        <text>heptanoate + ATP + CoA = heptanoyl-CoA + AMP + diphosphate</text>
        <dbReference type="Rhea" id="RHEA:44088"/>
        <dbReference type="ChEBI" id="CHEBI:30616"/>
        <dbReference type="ChEBI" id="CHEBI:32362"/>
        <dbReference type="ChEBI" id="CHEBI:33019"/>
        <dbReference type="ChEBI" id="CHEBI:57287"/>
        <dbReference type="ChEBI" id="CHEBI:78811"/>
        <dbReference type="ChEBI" id="CHEBI:456215"/>
    </reaction>
    <physiologicalReaction direction="left-to-right" evidence="5">
        <dbReference type="Rhea" id="RHEA:44089"/>
    </physiologicalReaction>
</comment>
<comment type="cofactor">
    <cofactor evidence="1">
        <name>Mg(2+)</name>
        <dbReference type="ChEBI" id="CHEBI:18420"/>
    </cofactor>
</comment>
<comment type="biophysicochemical properties">
    <kinetics>
        <KM evidence="5">47.5 uM for tetradecanoate</KM>
        <KM evidence="6">112 uM for trans-cinnamate</KM>
        <KM evidence="6">125 uM for p-coumarate</KM>
        <KM evidence="6">113 uM for ferulate</KM>
        <KM evidence="6">85 uM for caffeate</KM>
        <KM evidence="6">67 uM for 4-hydroxybenzoate</KM>
        <text evidence="5 6">kcat is 0.43 sec(-1) with tetradecanoate as substrate (PubMed:18267944). kcat is 0.7 sec(-1) with trans-cinnamate as substrate (PubMed:24838974). kcat is 2.1 sec(-1) with p-coumarate as substrate (PubMed:24838974). kcat is 3.6 sec(-1) with ferulate as substrate (PubMed:24838974). kcat is 2.4 sec(-1) with caffeate as substrate (PubMed:24838974). kcat is 0.01 sec(-1) with 4-hydroxybenzoate as substrate (PubMed:24838974).</text>
    </kinetics>
</comment>
<comment type="subcellular location">
    <subcellularLocation>
        <location evidence="6">Peroxisome</location>
    </subcellularLocation>
</comment>
<comment type="tissue specificity">
    <text evidence="5">Expressed at very low level in leaves.</text>
</comment>
<comment type="domain">
    <text evidence="2">Both substrate-binding domains (SBD1 and SBD2) are involved in the substrate recognition, and are sufficient to confer the substrate specificity.</text>
</comment>
<comment type="disruption phenotype">
    <text evidence="6">Cannot use 4-coumarate for ubiquinone biosynthesis.</text>
</comment>
<comment type="similarity">
    <text evidence="9">Belongs to the ATP-dependent AMP-binding enzyme family.</text>
</comment>